<evidence type="ECO:0000255" key="1">
    <source>
        <dbReference type="HAMAP-Rule" id="MF_02113"/>
    </source>
</evidence>
<feature type="propeptide" id="PRO_0000397364" description="Removed in mature form; by autocatalysis" evidence="1">
    <location>
        <begin position="1"/>
        <end position="11"/>
    </location>
</feature>
<feature type="chain" id="PRO_0000397365" description="Proteasome subunit beta">
    <location>
        <begin position="12"/>
        <end position="213"/>
    </location>
</feature>
<feature type="active site" description="Nucleophile" evidence="1">
    <location>
        <position position="12"/>
    </location>
</feature>
<comment type="function">
    <text evidence="1">Component of the proteasome core, a large protease complex with broad specificity involved in protein degradation.</text>
</comment>
<comment type="catalytic activity">
    <reaction evidence="1">
        <text>Cleavage of peptide bonds with very broad specificity.</text>
        <dbReference type="EC" id="3.4.25.1"/>
    </reaction>
</comment>
<comment type="activity regulation">
    <text evidence="1">The formation of the proteasomal ATPase PAN-20S proteasome complex, via the docking of the C-termini of PAN into the intersubunit pockets in the alpha-rings, triggers opening of the gate for substrate entry. Interconversion between the open-gate and close-gate conformations leads to a dynamic regulation of the 20S proteasome proteolysis activity.</text>
</comment>
<comment type="subunit">
    <text evidence="1">The 20S proteasome core is composed of 14 alpha and 14 beta subunits that assemble into four stacked heptameric rings, resulting in a barrel-shaped structure. The two inner rings, each composed of seven catalytic beta subunits, are sandwiched by two outer rings, each composed of seven alpha subunits. The catalytic chamber with the active sites is on the inside of the barrel. Has a gated structure, the ends of the cylinder being occluded by the N-termini of the alpha-subunits. Is capped at one or both ends by the proteasome regulatory ATPase, PAN.</text>
</comment>
<comment type="subcellular location">
    <subcellularLocation>
        <location evidence="1">Cytoplasm</location>
    </subcellularLocation>
</comment>
<comment type="similarity">
    <text evidence="1">Belongs to the peptidase T1B family.</text>
</comment>
<dbReference type="EC" id="3.4.25.1" evidence="1"/>
<dbReference type="EMBL" id="CP000780">
    <property type="protein sequence ID" value="ABS55902.1"/>
    <property type="molecule type" value="Genomic_DNA"/>
</dbReference>
<dbReference type="RefSeq" id="WP_012106935.1">
    <property type="nucleotide sequence ID" value="NC_009712.1"/>
</dbReference>
<dbReference type="SMR" id="A7I841"/>
<dbReference type="STRING" id="456442.Mboo_1384"/>
<dbReference type="MEROPS" id="T01.002"/>
<dbReference type="GeneID" id="5412034"/>
<dbReference type="KEGG" id="mbn:Mboo_1384"/>
<dbReference type="eggNOG" id="arCOG00970">
    <property type="taxonomic scope" value="Archaea"/>
</dbReference>
<dbReference type="HOGENOM" id="CLU_035750_7_2_2"/>
<dbReference type="OrthoDB" id="6330at2157"/>
<dbReference type="Proteomes" id="UP000002408">
    <property type="component" value="Chromosome"/>
</dbReference>
<dbReference type="GO" id="GO:0005737">
    <property type="term" value="C:cytoplasm"/>
    <property type="evidence" value="ECO:0007669"/>
    <property type="project" value="UniProtKB-SubCell"/>
</dbReference>
<dbReference type="GO" id="GO:0019774">
    <property type="term" value="C:proteasome core complex, beta-subunit complex"/>
    <property type="evidence" value="ECO:0007669"/>
    <property type="project" value="UniProtKB-UniRule"/>
</dbReference>
<dbReference type="GO" id="GO:0004298">
    <property type="term" value="F:threonine-type endopeptidase activity"/>
    <property type="evidence" value="ECO:0007669"/>
    <property type="project" value="UniProtKB-UniRule"/>
</dbReference>
<dbReference type="GO" id="GO:0010498">
    <property type="term" value="P:proteasomal protein catabolic process"/>
    <property type="evidence" value="ECO:0007669"/>
    <property type="project" value="UniProtKB-UniRule"/>
</dbReference>
<dbReference type="CDD" id="cd03764">
    <property type="entry name" value="proteasome_beta_archeal"/>
    <property type="match status" value="1"/>
</dbReference>
<dbReference type="FunFam" id="3.60.20.10:FF:000049">
    <property type="entry name" value="Proteasome subunit beta"/>
    <property type="match status" value="1"/>
</dbReference>
<dbReference type="Gene3D" id="3.60.20.10">
    <property type="entry name" value="Glutamine Phosphoribosylpyrophosphate, subunit 1, domain 1"/>
    <property type="match status" value="1"/>
</dbReference>
<dbReference type="HAMAP" id="MF_02113_A">
    <property type="entry name" value="Proteasome_B_A"/>
    <property type="match status" value="1"/>
</dbReference>
<dbReference type="InterPro" id="IPR029055">
    <property type="entry name" value="Ntn_hydrolases_N"/>
</dbReference>
<dbReference type="InterPro" id="IPR019983">
    <property type="entry name" value="Pept_T1A_Psome_bsu_arc"/>
</dbReference>
<dbReference type="InterPro" id="IPR000243">
    <property type="entry name" value="Pept_T1A_subB"/>
</dbReference>
<dbReference type="InterPro" id="IPR016050">
    <property type="entry name" value="Proteasome_bsu_CS"/>
</dbReference>
<dbReference type="InterPro" id="IPR001353">
    <property type="entry name" value="Proteasome_sua/b"/>
</dbReference>
<dbReference type="InterPro" id="IPR023333">
    <property type="entry name" value="Proteasome_suB-type"/>
</dbReference>
<dbReference type="NCBIfam" id="TIGR03634">
    <property type="entry name" value="arc_protsome_B"/>
    <property type="match status" value="1"/>
</dbReference>
<dbReference type="PANTHER" id="PTHR32194:SF0">
    <property type="entry name" value="ATP-DEPENDENT PROTEASE SUBUNIT HSLV"/>
    <property type="match status" value="1"/>
</dbReference>
<dbReference type="PANTHER" id="PTHR32194">
    <property type="entry name" value="METALLOPROTEASE TLDD"/>
    <property type="match status" value="1"/>
</dbReference>
<dbReference type="Pfam" id="PF00227">
    <property type="entry name" value="Proteasome"/>
    <property type="match status" value="1"/>
</dbReference>
<dbReference type="PRINTS" id="PR00141">
    <property type="entry name" value="PROTEASOME"/>
</dbReference>
<dbReference type="SUPFAM" id="SSF56235">
    <property type="entry name" value="N-terminal nucleophile aminohydrolases (Ntn hydrolases)"/>
    <property type="match status" value="1"/>
</dbReference>
<dbReference type="PROSITE" id="PS00854">
    <property type="entry name" value="PROTEASOME_BETA_1"/>
    <property type="match status" value="1"/>
</dbReference>
<dbReference type="PROSITE" id="PS51476">
    <property type="entry name" value="PROTEASOME_BETA_2"/>
    <property type="match status" value="1"/>
</dbReference>
<name>PSB_METB6</name>
<proteinExistence type="inferred from homology"/>
<sequence length="213" mass="23165">MPEQYQESMTGTTTVGLVFAGGVILATEKRATMGYMIASKRAKKVYQIADRIGMTIAGGVGDAQQLARIITVECNLYQIRRSREITVGAASTLLSNYLNQNRYFPYYVQLLVGGIDDHGPSVYSVDAMGGATKEEDIVSTGSGSPMAYGVLEDRYRPGMNEDEAVELAVRALRSAMKRDAGSGEGIHVVVITKDRYENVSEETIKKHLAKTIA</sequence>
<keyword id="KW-0068">Autocatalytic cleavage</keyword>
<keyword id="KW-0963">Cytoplasm</keyword>
<keyword id="KW-0378">Hydrolase</keyword>
<keyword id="KW-0645">Protease</keyword>
<keyword id="KW-0647">Proteasome</keyword>
<keyword id="KW-1185">Reference proteome</keyword>
<keyword id="KW-0888">Threonine protease</keyword>
<keyword id="KW-0865">Zymogen</keyword>
<organism>
    <name type="scientific">Methanoregula boonei (strain DSM 21154 / JCM 14090 / 6A8)</name>
    <dbReference type="NCBI Taxonomy" id="456442"/>
    <lineage>
        <taxon>Archaea</taxon>
        <taxon>Methanobacteriati</taxon>
        <taxon>Methanobacteriota</taxon>
        <taxon>Stenosarchaea group</taxon>
        <taxon>Methanomicrobia</taxon>
        <taxon>Methanomicrobiales</taxon>
        <taxon>Methanoregulaceae</taxon>
        <taxon>Methanoregula</taxon>
    </lineage>
</organism>
<protein>
    <recommendedName>
        <fullName evidence="1">Proteasome subunit beta</fullName>
        <ecNumber evidence="1">3.4.25.1</ecNumber>
    </recommendedName>
    <alternativeName>
        <fullName evidence="1">20S proteasome beta subunit</fullName>
    </alternativeName>
    <alternativeName>
        <fullName evidence="1">Proteasome core protein PsmB</fullName>
    </alternativeName>
</protein>
<reference key="1">
    <citation type="journal article" date="2015" name="Microbiology">
        <title>Genome of Methanoregula boonei 6A8 reveals adaptations to oligotrophic peatland environments.</title>
        <authorList>
            <person name="Braeuer S."/>
            <person name="Cadillo-Quiroz H."/>
            <person name="Kyrpides N."/>
            <person name="Woyke T."/>
            <person name="Goodwin L."/>
            <person name="Detter C."/>
            <person name="Podell S."/>
            <person name="Yavitt J.B."/>
            <person name="Zinder S.H."/>
        </authorList>
    </citation>
    <scope>NUCLEOTIDE SEQUENCE [LARGE SCALE GENOMIC DNA]</scope>
    <source>
        <strain>DSM 21154 / JCM 14090 / 6A8</strain>
    </source>
</reference>
<gene>
    <name evidence="1" type="primary">psmB</name>
    <name type="ordered locus">Mboo_1384</name>
</gene>
<accession>A7I841</accession>